<dbReference type="EC" id="5.2.1.8" evidence="1"/>
<dbReference type="EMBL" id="CP000939">
    <property type="protein sequence ID" value="ACA45212.1"/>
    <property type="molecule type" value="Genomic_DNA"/>
</dbReference>
<dbReference type="RefSeq" id="WP_015957817.1">
    <property type="nucleotide sequence ID" value="NC_010516.1"/>
</dbReference>
<dbReference type="SMR" id="B1IGZ5"/>
<dbReference type="KEGG" id="cbb:CLD_0945"/>
<dbReference type="HOGENOM" id="CLU_034646_5_2_9"/>
<dbReference type="Proteomes" id="UP000008541">
    <property type="component" value="Chromosome"/>
</dbReference>
<dbReference type="GO" id="GO:0005886">
    <property type="term" value="C:plasma membrane"/>
    <property type="evidence" value="ECO:0007669"/>
    <property type="project" value="UniProtKB-SubCell"/>
</dbReference>
<dbReference type="GO" id="GO:0003755">
    <property type="term" value="F:peptidyl-prolyl cis-trans isomerase activity"/>
    <property type="evidence" value="ECO:0007669"/>
    <property type="project" value="UniProtKB-UniRule"/>
</dbReference>
<dbReference type="GO" id="GO:0006457">
    <property type="term" value="P:protein folding"/>
    <property type="evidence" value="ECO:0007669"/>
    <property type="project" value="UniProtKB-UniRule"/>
</dbReference>
<dbReference type="Gene3D" id="3.10.50.40">
    <property type="match status" value="1"/>
</dbReference>
<dbReference type="Gene3D" id="1.10.4030.10">
    <property type="entry name" value="Porin chaperone SurA, peptide-binding domain"/>
    <property type="match status" value="1"/>
</dbReference>
<dbReference type="HAMAP" id="MF_01145">
    <property type="entry name" value="Foldase_PrsA"/>
    <property type="match status" value="1"/>
</dbReference>
<dbReference type="InterPro" id="IPR023059">
    <property type="entry name" value="Foldase_PrsA"/>
</dbReference>
<dbReference type="InterPro" id="IPR046357">
    <property type="entry name" value="PPIase_dom_sf"/>
</dbReference>
<dbReference type="InterPro" id="IPR000297">
    <property type="entry name" value="PPIase_PpiC"/>
</dbReference>
<dbReference type="InterPro" id="IPR023058">
    <property type="entry name" value="PPIase_PpiC_CS"/>
</dbReference>
<dbReference type="InterPro" id="IPR050245">
    <property type="entry name" value="PrsA_foldase"/>
</dbReference>
<dbReference type="InterPro" id="IPR027304">
    <property type="entry name" value="Trigger_fact/SurA_dom_sf"/>
</dbReference>
<dbReference type="NCBIfam" id="NF000809">
    <property type="entry name" value="PRK00059.1"/>
    <property type="match status" value="1"/>
</dbReference>
<dbReference type="PANTHER" id="PTHR47245:SF1">
    <property type="entry name" value="FOLDASE PROTEIN PRSA"/>
    <property type="match status" value="1"/>
</dbReference>
<dbReference type="PANTHER" id="PTHR47245">
    <property type="entry name" value="PEPTIDYLPROLYL ISOMERASE"/>
    <property type="match status" value="1"/>
</dbReference>
<dbReference type="Pfam" id="PF13145">
    <property type="entry name" value="Rotamase_2"/>
    <property type="match status" value="1"/>
</dbReference>
<dbReference type="Pfam" id="PF13624">
    <property type="entry name" value="SurA_N_3"/>
    <property type="match status" value="1"/>
</dbReference>
<dbReference type="SUPFAM" id="SSF54534">
    <property type="entry name" value="FKBP-like"/>
    <property type="match status" value="1"/>
</dbReference>
<dbReference type="SUPFAM" id="SSF109998">
    <property type="entry name" value="Triger factor/SurA peptide-binding domain-like"/>
    <property type="match status" value="1"/>
</dbReference>
<dbReference type="PROSITE" id="PS01096">
    <property type="entry name" value="PPIC_PPIASE_1"/>
    <property type="match status" value="1"/>
</dbReference>
<dbReference type="PROSITE" id="PS50198">
    <property type="entry name" value="PPIC_PPIASE_2"/>
    <property type="match status" value="1"/>
</dbReference>
<dbReference type="PROSITE" id="PS51257">
    <property type="entry name" value="PROKAR_LIPOPROTEIN"/>
    <property type="match status" value="1"/>
</dbReference>
<proteinExistence type="inferred from homology"/>
<protein>
    <recommendedName>
        <fullName evidence="1">Foldase protein PrsA</fullName>
        <ecNumber evidence="1">5.2.1.8</ecNumber>
    </recommendedName>
</protein>
<name>PRSA_CLOBK</name>
<comment type="function">
    <text evidence="1">Plays a major role in protein secretion by helping the post-translocational extracellular folding of several secreted proteins.</text>
</comment>
<comment type="catalytic activity">
    <reaction evidence="1">
        <text>[protein]-peptidylproline (omega=180) = [protein]-peptidylproline (omega=0)</text>
        <dbReference type="Rhea" id="RHEA:16237"/>
        <dbReference type="Rhea" id="RHEA-COMP:10747"/>
        <dbReference type="Rhea" id="RHEA-COMP:10748"/>
        <dbReference type="ChEBI" id="CHEBI:83833"/>
        <dbReference type="ChEBI" id="CHEBI:83834"/>
        <dbReference type="EC" id="5.2.1.8"/>
    </reaction>
</comment>
<comment type="subcellular location">
    <subcellularLocation>
        <location evidence="1">Cell membrane</location>
        <topology evidence="1">Lipid-anchor</topology>
    </subcellularLocation>
</comment>
<comment type="similarity">
    <text evidence="1">Belongs to the PrsA family.</text>
</comment>
<organism>
    <name type="scientific">Clostridium botulinum (strain Okra / Type B1)</name>
    <dbReference type="NCBI Taxonomy" id="498213"/>
    <lineage>
        <taxon>Bacteria</taxon>
        <taxon>Bacillati</taxon>
        <taxon>Bacillota</taxon>
        <taxon>Clostridia</taxon>
        <taxon>Eubacteriales</taxon>
        <taxon>Clostridiaceae</taxon>
        <taxon>Clostridium</taxon>
    </lineage>
</organism>
<keyword id="KW-1003">Cell membrane</keyword>
<keyword id="KW-0413">Isomerase</keyword>
<keyword id="KW-0449">Lipoprotein</keyword>
<keyword id="KW-0472">Membrane</keyword>
<keyword id="KW-0564">Palmitate</keyword>
<keyword id="KW-0697">Rotamase</keyword>
<keyword id="KW-0732">Signal</keyword>
<gene>
    <name evidence="1" type="primary">prsA</name>
    <name type="ordered locus">CLD_0945</name>
</gene>
<accession>B1IGZ5</accession>
<sequence>MKSAKKLLSVLCLGIFILTFTACDMVEKTPEAKAKSTIAKVNGEKIQRKDLDESPSMQQVLSQIKTQYGEEFEKSEQGKEVIKEQKKQILENLITEKVLLQKGKELKVIPKDEELNKEADKKVNEIKAVYNNDEKKFEETLKSTGFTKETLKEYLKDQIVIEKVINEVTKDVKVEDKDAQKYYNENQSMFTEKPNTMNVSHILVKTEDEAKKVKKRLDAKEDFAKVAKEVSQDTGSKDKGGLLGDISYSDSNFDPTFMKAAIALKSGAISNPVHTQFGYHIIKINSKKEYPVKKFDSVKEDIKKQLKQEKQQEAYTKKIEEWKKASKIKTYEKNLL</sequence>
<reference key="1">
    <citation type="journal article" date="2007" name="PLoS ONE">
        <title>Analysis of the neurotoxin complex genes in Clostridium botulinum A1-A4 and B1 strains: BoNT/A3, /Ba4 and /B1 clusters are located within plasmids.</title>
        <authorList>
            <person name="Smith T.J."/>
            <person name="Hill K.K."/>
            <person name="Foley B.T."/>
            <person name="Detter J.C."/>
            <person name="Munk A.C."/>
            <person name="Bruce D.C."/>
            <person name="Doggett N.A."/>
            <person name="Smith L.A."/>
            <person name="Marks J.D."/>
            <person name="Xie G."/>
            <person name="Brettin T.S."/>
        </authorList>
    </citation>
    <scope>NUCLEOTIDE SEQUENCE [LARGE SCALE GENOMIC DNA]</scope>
    <source>
        <strain>Okra / Type B1</strain>
    </source>
</reference>
<evidence type="ECO:0000255" key="1">
    <source>
        <dbReference type="HAMAP-Rule" id="MF_01145"/>
    </source>
</evidence>
<feature type="signal peptide" evidence="1">
    <location>
        <begin position="1"/>
        <end position="22"/>
    </location>
</feature>
<feature type="chain" id="PRO_1000137381" description="Foldase protein PrsA">
    <location>
        <begin position="23"/>
        <end position="336"/>
    </location>
</feature>
<feature type="domain" description="PpiC" evidence="1">
    <location>
        <begin position="194"/>
        <end position="286"/>
    </location>
</feature>
<feature type="lipid moiety-binding region" description="N-palmitoyl cysteine" evidence="1">
    <location>
        <position position="23"/>
    </location>
</feature>
<feature type="lipid moiety-binding region" description="S-diacylglycerol cysteine" evidence="1">
    <location>
        <position position="23"/>
    </location>
</feature>